<keyword id="KW-0119">Carbohydrate metabolism</keyword>
<keyword id="KW-0963">Cytoplasm</keyword>
<keyword id="KW-0378">Hydrolase</keyword>
<keyword id="KW-0460">Magnesium</keyword>
<keyword id="KW-0479">Metal-binding</keyword>
<keyword id="KW-1185">Reference proteome</keyword>
<protein>
    <recommendedName>
        <fullName evidence="1">Fructose-1,6-bisphosphatase class 1</fullName>
        <shortName evidence="1">FBPase class 1</shortName>
        <ecNumber evidence="1">3.1.3.11</ecNumber>
    </recommendedName>
    <alternativeName>
        <fullName evidence="1">D-fructose-1,6-bisphosphate 1-phosphohydrolase class 1</fullName>
    </alternativeName>
</protein>
<reference key="1">
    <citation type="journal article" date="2005" name="Arch. Microbiol.">
        <title>The genome sequence of an anaerobic aromatic-degrading denitrifying bacterium, strain EbN1.</title>
        <authorList>
            <person name="Rabus R."/>
            <person name="Kube M."/>
            <person name="Heider J."/>
            <person name="Beck A."/>
            <person name="Heitmann K."/>
            <person name="Widdel F."/>
            <person name="Reinhardt R."/>
        </authorList>
    </citation>
    <scope>NUCLEOTIDE SEQUENCE [LARGE SCALE GENOMIC DNA]</scope>
    <source>
        <strain>DSM 19018 / LMG 30748 / EbN1</strain>
    </source>
</reference>
<sequence>MRRVTLTQFLIEQQRAGRTSPDLRLLIEVVARAVKAIAVNVSKGALADLLGEAGTDNVQGEAQKKLDVIANEILLQANEWGGHLAAMASEEVEEVHQIPFDYPKGGYLLLFDPLDGSSNIDVNISVGTIFSVLRFPEGIQEPNEQCFLQPGREQVAAGYALYGPSTLLILTVGNGVHGFTLDREMGSFVYTHPFMTVPVDTQEYAINASNARHWEPPVQRYVAELQQGRTGPRGKDFNMRWVASMVADVHRVLTRGGIFMYPLDEKCRDQGGKLRLMYEANPMAMIVEQAGGSATTGRQRILDVQPAKLHQRVPVILGSTHEVERVTAYHREG</sequence>
<gene>
    <name evidence="1" type="primary">fbp</name>
    <name type="ordered locus">AZOSEA06310</name>
    <name type="ORF">ebA1191</name>
</gene>
<dbReference type="EC" id="3.1.3.11" evidence="1"/>
<dbReference type="EMBL" id="CR555306">
    <property type="protein sequence ID" value="CAI06753.1"/>
    <property type="molecule type" value="Genomic_DNA"/>
</dbReference>
<dbReference type="RefSeq" id="WP_011236482.1">
    <property type="nucleotide sequence ID" value="NC_006513.1"/>
</dbReference>
<dbReference type="SMR" id="Q5P7F8"/>
<dbReference type="STRING" id="76114.ebA1191"/>
<dbReference type="KEGG" id="eba:ebA1191"/>
<dbReference type="eggNOG" id="COG0158">
    <property type="taxonomic scope" value="Bacteria"/>
</dbReference>
<dbReference type="HOGENOM" id="CLU_039977_0_0_4"/>
<dbReference type="OrthoDB" id="9806756at2"/>
<dbReference type="UniPathway" id="UPA00138"/>
<dbReference type="Proteomes" id="UP000006552">
    <property type="component" value="Chromosome"/>
</dbReference>
<dbReference type="GO" id="GO:0005829">
    <property type="term" value="C:cytosol"/>
    <property type="evidence" value="ECO:0007669"/>
    <property type="project" value="TreeGrafter"/>
</dbReference>
<dbReference type="GO" id="GO:0042132">
    <property type="term" value="F:fructose 1,6-bisphosphate 1-phosphatase activity"/>
    <property type="evidence" value="ECO:0007669"/>
    <property type="project" value="UniProtKB-UniRule"/>
</dbReference>
<dbReference type="GO" id="GO:0000287">
    <property type="term" value="F:magnesium ion binding"/>
    <property type="evidence" value="ECO:0007669"/>
    <property type="project" value="UniProtKB-UniRule"/>
</dbReference>
<dbReference type="GO" id="GO:0030388">
    <property type="term" value="P:fructose 1,6-bisphosphate metabolic process"/>
    <property type="evidence" value="ECO:0007669"/>
    <property type="project" value="TreeGrafter"/>
</dbReference>
<dbReference type="GO" id="GO:0006002">
    <property type="term" value="P:fructose 6-phosphate metabolic process"/>
    <property type="evidence" value="ECO:0007669"/>
    <property type="project" value="TreeGrafter"/>
</dbReference>
<dbReference type="GO" id="GO:0006000">
    <property type="term" value="P:fructose metabolic process"/>
    <property type="evidence" value="ECO:0007669"/>
    <property type="project" value="TreeGrafter"/>
</dbReference>
<dbReference type="GO" id="GO:0006094">
    <property type="term" value="P:gluconeogenesis"/>
    <property type="evidence" value="ECO:0007669"/>
    <property type="project" value="UniProtKB-UniRule"/>
</dbReference>
<dbReference type="GO" id="GO:0005986">
    <property type="term" value="P:sucrose biosynthetic process"/>
    <property type="evidence" value="ECO:0007669"/>
    <property type="project" value="TreeGrafter"/>
</dbReference>
<dbReference type="CDD" id="cd00354">
    <property type="entry name" value="FBPase"/>
    <property type="match status" value="1"/>
</dbReference>
<dbReference type="FunFam" id="3.30.540.10:FF:000006">
    <property type="entry name" value="Fructose-1,6-bisphosphatase class 1"/>
    <property type="match status" value="1"/>
</dbReference>
<dbReference type="FunFam" id="3.40.190.80:FF:000011">
    <property type="entry name" value="Fructose-1,6-bisphosphatase class 1"/>
    <property type="match status" value="1"/>
</dbReference>
<dbReference type="Gene3D" id="3.40.190.80">
    <property type="match status" value="1"/>
</dbReference>
<dbReference type="Gene3D" id="3.30.540.10">
    <property type="entry name" value="Fructose-1,6-Bisphosphatase, subunit A, domain 1"/>
    <property type="match status" value="1"/>
</dbReference>
<dbReference type="HAMAP" id="MF_01855">
    <property type="entry name" value="FBPase_class1"/>
    <property type="match status" value="1"/>
</dbReference>
<dbReference type="InterPro" id="IPR044015">
    <property type="entry name" value="FBPase_C_dom"/>
</dbReference>
<dbReference type="InterPro" id="IPR000146">
    <property type="entry name" value="FBPase_class-1"/>
</dbReference>
<dbReference type="InterPro" id="IPR033391">
    <property type="entry name" value="FBPase_N"/>
</dbReference>
<dbReference type="InterPro" id="IPR028343">
    <property type="entry name" value="FBPtase"/>
</dbReference>
<dbReference type="NCBIfam" id="NF006778">
    <property type="entry name" value="PRK09293.1-1"/>
    <property type="match status" value="1"/>
</dbReference>
<dbReference type="NCBIfam" id="NF006779">
    <property type="entry name" value="PRK09293.1-3"/>
    <property type="match status" value="1"/>
</dbReference>
<dbReference type="NCBIfam" id="NF006780">
    <property type="entry name" value="PRK09293.1-4"/>
    <property type="match status" value="1"/>
</dbReference>
<dbReference type="PANTHER" id="PTHR11556">
    <property type="entry name" value="FRUCTOSE-1,6-BISPHOSPHATASE-RELATED"/>
    <property type="match status" value="1"/>
</dbReference>
<dbReference type="PANTHER" id="PTHR11556:SF35">
    <property type="entry name" value="SEDOHEPTULOSE-1,7-BISPHOSPHATASE, CHLOROPLASTIC"/>
    <property type="match status" value="1"/>
</dbReference>
<dbReference type="Pfam" id="PF00316">
    <property type="entry name" value="FBPase"/>
    <property type="match status" value="1"/>
</dbReference>
<dbReference type="Pfam" id="PF18913">
    <property type="entry name" value="FBPase_C"/>
    <property type="match status" value="1"/>
</dbReference>
<dbReference type="PIRSF" id="PIRSF500210">
    <property type="entry name" value="FBPtase"/>
    <property type="match status" value="1"/>
</dbReference>
<dbReference type="PIRSF" id="PIRSF000904">
    <property type="entry name" value="FBPtase_SBPase"/>
    <property type="match status" value="1"/>
</dbReference>
<dbReference type="PRINTS" id="PR00115">
    <property type="entry name" value="F16BPHPHTASE"/>
</dbReference>
<dbReference type="SUPFAM" id="SSF56655">
    <property type="entry name" value="Carbohydrate phosphatase"/>
    <property type="match status" value="1"/>
</dbReference>
<feature type="chain" id="PRO_0000364465" description="Fructose-1,6-bisphosphatase class 1">
    <location>
        <begin position="1"/>
        <end position="333"/>
    </location>
</feature>
<feature type="binding site" evidence="1">
    <location>
        <position position="90"/>
    </location>
    <ligand>
        <name>Mg(2+)</name>
        <dbReference type="ChEBI" id="CHEBI:18420"/>
        <label>1</label>
    </ligand>
</feature>
<feature type="binding site" evidence="1">
    <location>
        <position position="112"/>
    </location>
    <ligand>
        <name>Mg(2+)</name>
        <dbReference type="ChEBI" id="CHEBI:18420"/>
        <label>1</label>
    </ligand>
</feature>
<feature type="binding site" evidence="1">
    <location>
        <position position="112"/>
    </location>
    <ligand>
        <name>Mg(2+)</name>
        <dbReference type="ChEBI" id="CHEBI:18420"/>
        <label>2</label>
    </ligand>
</feature>
<feature type="binding site" evidence="1">
    <location>
        <position position="114"/>
    </location>
    <ligand>
        <name>Mg(2+)</name>
        <dbReference type="ChEBI" id="CHEBI:18420"/>
        <label>1</label>
    </ligand>
</feature>
<feature type="binding site" evidence="1">
    <location>
        <begin position="115"/>
        <end position="118"/>
    </location>
    <ligand>
        <name>substrate</name>
    </ligand>
</feature>
<feature type="binding site" evidence="1">
    <location>
        <position position="115"/>
    </location>
    <ligand>
        <name>Mg(2+)</name>
        <dbReference type="ChEBI" id="CHEBI:18420"/>
        <label>2</label>
    </ligand>
</feature>
<feature type="binding site" evidence="1">
    <location>
        <position position="207"/>
    </location>
    <ligand>
        <name>substrate</name>
    </ligand>
</feature>
<feature type="binding site" evidence="1">
    <location>
        <position position="273"/>
    </location>
    <ligand>
        <name>substrate</name>
    </ligand>
</feature>
<feature type="binding site" evidence="1">
    <location>
        <position position="279"/>
    </location>
    <ligand>
        <name>Mg(2+)</name>
        <dbReference type="ChEBI" id="CHEBI:18420"/>
        <label>2</label>
    </ligand>
</feature>
<organism>
    <name type="scientific">Aromatoleum aromaticum (strain DSM 19018 / LMG 30748 / EbN1)</name>
    <name type="common">Azoarcus sp. (strain EbN1)</name>
    <dbReference type="NCBI Taxonomy" id="76114"/>
    <lineage>
        <taxon>Bacteria</taxon>
        <taxon>Pseudomonadati</taxon>
        <taxon>Pseudomonadota</taxon>
        <taxon>Betaproteobacteria</taxon>
        <taxon>Rhodocyclales</taxon>
        <taxon>Rhodocyclaceae</taxon>
        <taxon>Aromatoleum</taxon>
    </lineage>
</organism>
<evidence type="ECO:0000255" key="1">
    <source>
        <dbReference type="HAMAP-Rule" id="MF_01855"/>
    </source>
</evidence>
<accession>Q5P7F8</accession>
<name>F16PA_AROAE</name>
<proteinExistence type="inferred from homology"/>
<comment type="catalytic activity">
    <reaction evidence="1">
        <text>beta-D-fructose 1,6-bisphosphate + H2O = beta-D-fructose 6-phosphate + phosphate</text>
        <dbReference type="Rhea" id="RHEA:11064"/>
        <dbReference type="ChEBI" id="CHEBI:15377"/>
        <dbReference type="ChEBI" id="CHEBI:32966"/>
        <dbReference type="ChEBI" id="CHEBI:43474"/>
        <dbReference type="ChEBI" id="CHEBI:57634"/>
        <dbReference type="EC" id="3.1.3.11"/>
    </reaction>
</comment>
<comment type="cofactor">
    <cofactor evidence="1">
        <name>Mg(2+)</name>
        <dbReference type="ChEBI" id="CHEBI:18420"/>
    </cofactor>
    <text evidence="1">Binds 2 magnesium ions per subunit.</text>
</comment>
<comment type="pathway">
    <text evidence="1">Carbohydrate biosynthesis; gluconeogenesis.</text>
</comment>
<comment type="subunit">
    <text evidence="1">Homotetramer.</text>
</comment>
<comment type="subcellular location">
    <subcellularLocation>
        <location evidence="1">Cytoplasm</location>
    </subcellularLocation>
</comment>
<comment type="similarity">
    <text evidence="1">Belongs to the FBPase class 1 family.</text>
</comment>